<keyword id="KW-0694">RNA-binding</keyword>
<keyword id="KW-0804">Transcription</keyword>
<keyword id="KW-0889">Transcription antitermination</keyword>
<keyword id="KW-0805">Transcription regulation</keyword>
<comment type="function">
    <text evidence="1">Involved in transcription antitermination. Required for transcription of ribosomal RNA (rRNA) genes. Binds specifically to the boxA antiterminator sequence of the ribosomal RNA (rrn) operons.</text>
</comment>
<comment type="similarity">
    <text evidence="1">Belongs to the NusB family.</text>
</comment>
<comment type="sequence caution" evidence="2">
    <conflict type="erroneous initiation">
        <sequence resource="EMBL-CDS" id="AAX72642"/>
    </conflict>
</comment>
<proteinExistence type="inferred from homology"/>
<evidence type="ECO:0000255" key="1">
    <source>
        <dbReference type="HAMAP-Rule" id="MF_00073"/>
    </source>
</evidence>
<evidence type="ECO:0000305" key="2"/>
<reference key="1">
    <citation type="journal article" date="2005" name="J. Infect. Dis.">
        <title>Genome sequence of a serotype M28 strain of group A Streptococcus: potential new insights into puerperal sepsis and bacterial disease specificity.</title>
        <authorList>
            <person name="Green N.M."/>
            <person name="Zhang S."/>
            <person name="Porcella S.F."/>
            <person name="Nagiec M.J."/>
            <person name="Barbian K.D."/>
            <person name="Beres S.B."/>
            <person name="Lefebvre R.B."/>
            <person name="Musser J.M."/>
        </authorList>
    </citation>
    <scope>NUCLEOTIDE SEQUENCE [LARGE SCALE GENOMIC DNA]</scope>
    <source>
        <strain>MGAS6180</strain>
    </source>
</reference>
<name>NUSB_STRPM</name>
<sequence length="150" mass="16979">MTNSFQNSRRDLRERAFQALFNIEMGAELLAASQFAYGYDKVTGEDAQVLELPIFLLSLVTGVNNHKEELDNLISTHLKKGWSLERLTLTDKTLLRLGLFEIKYFDETPDRVALNEIIEVAKKYSDETSAKFINGLLSQYVSEAPSANKS</sequence>
<gene>
    <name evidence="1" type="primary">nusB</name>
    <name type="ordered locus">M28_Spy1532</name>
</gene>
<organism>
    <name type="scientific">Streptococcus pyogenes serotype M28 (strain MGAS6180)</name>
    <dbReference type="NCBI Taxonomy" id="319701"/>
    <lineage>
        <taxon>Bacteria</taxon>
        <taxon>Bacillati</taxon>
        <taxon>Bacillota</taxon>
        <taxon>Bacilli</taxon>
        <taxon>Lactobacillales</taxon>
        <taxon>Streptococcaceae</taxon>
        <taxon>Streptococcus</taxon>
    </lineage>
</organism>
<protein>
    <recommendedName>
        <fullName evidence="1">Transcription antitermination protein NusB</fullName>
    </recommendedName>
    <alternativeName>
        <fullName evidence="1">Antitermination factor NusB</fullName>
    </alternativeName>
</protein>
<dbReference type="EMBL" id="CP000056">
    <property type="protein sequence ID" value="AAX72642.1"/>
    <property type="status" value="ALT_INIT"/>
    <property type="molecule type" value="Genomic_DNA"/>
</dbReference>
<dbReference type="RefSeq" id="WP_002988501.1">
    <property type="nucleotide sequence ID" value="NC_007296.2"/>
</dbReference>
<dbReference type="SMR" id="Q48RL8"/>
<dbReference type="GeneID" id="69900353"/>
<dbReference type="KEGG" id="spb:M28_Spy1532"/>
<dbReference type="HOGENOM" id="CLU_087843_3_2_9"/>
<dbReference type="GO" id="GO:0005829">
    <property type="term" value="C:cytosol"/>
    <property type="evidence" value="ECO:0007669"/>
    <property type="project" value="TreeGrafter"/>
</dbReference>
<dbReference type="GO" id="GO:0003723">
    <property type="term" value="F:RNA binding"/>
    <property type="evidence" value="ECO:0007669"/>
    <property type="project" value="UniProtKB-UniRule"/>
</dbReference>
<dbReference type="GO" id="GO:0006353">
    <property type="term" value="P:DNA-templated transcription termination"/>
    <property type="evidence" value="ECO:0007669"/>
    <property type="project" value="UniProtKB-UniRule"/>
</dbReference>
<dbReference type="GO" id="GO:0031564">
    <property type="term" value="P:transcription antitermination"/>
    <property type="evidence" value="ECO:0007669"/>
    <property type="project" value="UniProtKB-KW"/>
</dbReference>
<dbReference type="Gene3D" id="1.10.940.10">
    <property type="entry name" value="NusB-like"/>
    <property type="match status" value="1"/>
</dbReference>
<dbReference type="HAMAP" id="MF_00073">
    <property type="entry name" value="NusB"/>
    <property type="match status" value="1"/>
</dbReference>
<dbReference type="InterPro" id="IPR035926">
    <property type="entry name" value="NusB-like_sf"/>
</dbReference>
<dbReference type="InterPro" id="IPR011605">
    <property type="entry name" value="NusB_fam"/>
</dbReference>
<dbReference type="InterPro" id="IPR006027">
    <property type="entry name" value="NusB_RsmB_TIM44"/>
</dbReference>
<dbReference type="NCBIfam" id="TIGR01951">
    <property type="entry name" value="nusB"/>
    <property type="match status" value="1"/>
</dbReference>
<dbReference type="NCBIfam" id="NF001223">
    <property type="entry name" value="PRK00202.1-1"/>
    <property type="match status" value="1"/>
</dbReference>
<dbReference type="PANTHER" id="PTHR11078:SF3">
    <property type="entry name" value="ANTITERMINATION NUSB DOMAIN-CONTAINING PROTEIN"/>
    <property type="match status" value="1"/>
</dbReference>
<dbReference type="PANTHER" id="PTHR11078">
    <property type="entry name" value="N UTILIZATION SUBSTANCE PROTEIN B-RELATED"/>
    <property type="match status" value="1"/>
</dbReference>
<dbReference type="Pfam" id="PF01029">
    <property type="entry name" value="NusB"/>
    <property type="match status" value="1"/>
</dbReference>
<dbReference type="SUPFAM" id="SSF48013">
    <property type="entry name" value="NusB-like"/>
    <property type="match status" value="1"/>
</dbReference>
<accession>Q48RL8</accession>
<feature type="chain" id="PRO_0000265606" description="Transcription antitermination protein NusB">
    <location>
        <begin position="1"/>
        <end position="150"/>
    </location>
</feature>